<evidence type="ECO:0000255" key="1"/>
<evidence type="ECO:0000269" key="2">
    <source>
    </source>
</evidence>
<evidence type="ECO:0000303" key="3">
    <source>
    </source>
</evidence>
<evidence type="ECO:0000305" key="4">
    <source>
    </source>
</evidence>
<name>VERB_PENPO</name>
<protein>
    <recommendedName>
        <fullName evidence="3">Methyltransferase verB</fullName>
        <ecNumber evidence="4">2.1.1.-</ecNumber>
    </recommendedName>
    <alternativeName>
        <fullName evidence="3">Cluster 4 protein B</fullName>
    </alternativeName>
    <alternativeName>
        <fullName evidence="3">Verrucosidin biosynthesis cluster protein B</fullName>
    </alternativeName>
</protein>
<feature type="chain" id="PRO_0000455372" description="Methyltransferase verB">
    <location>
        <begin position="1"/>
        <end position="228"/>
    </location>
</feature>
<comment type="function">
    <text evidence="2 4">Methyltransferase; part of the gene cluster that mediates the biosynthesis of the neurotoxin verrucosidin, a methylated alpha-pyrone polyketide that inhibits oxidative phosphorylation in mitochondria and thereby causes neurological diseases (PubMed:34093475). The carbon backbone of verrucosidin is synthesized by the HR-PKS verA, and further modified by the other verrucodidin cluster enzymes (Probable).</text>
</comment>
<comment type="pathway">
    <text evidence="4">Secondary metabolite biosynthesis; terpenoid biosynthesis.</text>
</comment>
<comment type="pathway">
    <text evidence="4">Mycotoxin biosynthesis.</text>
</comment>
<comment type="similarity">
    <text evidence="1">Belongs to the methyltransferase superfamily.</text>
</comment>
<organism>
    <name type="scientific">Penicillium polonicum</name>
    <dbReference type="NCBI Taxonomy" id="60169"/>
    <lineage>
        <taxon>Eukaryota</taxon>
        <taxon>Fungi</taxon>
        <taxon>Dikarya</taxon>
        <taxon>Ascomycota</taxon>
        <taxon>Pezizomycotina</taxon>
        <taxon>Eurotiomycetes</taxon>
        <taxon>Eurotiomycetidae</taxon>
        <taxon>Eurotiales</taxon>
        <taxon>Aspergillaceae</taxon>
        <taxon>Penicillium</taxon>
    </lineage>
</organism>
<gene>
    <name evidence="3" type="primary">verB</name>
    <name evidence="3" type="synonym">cl4B</name>
    <name type="ORF">PENPOL_c002G01780</name>
</gene>
<keyword id="KW-0489">Methyltransferase</keyword>
<keyword id="KW-1185">Reference proteome</keyword>
<keyword id="KW-0808">Transferase</keyword>
<accession>A0A1V6NVX3</accession>
<sequence length="228" mass="25431">MHPSARLYNNIALWFYDYLVHSIFMVYGWHCPTKSVGLPFFSSHVGPKHMDVGVGTGYFPVAVRKSSRKRNGQLKPQWPQKLMLVDLNPNCTAMAATRVGAPDCTETLTADVLQPIPAAGKHETFDSLSLMNVLHCLPGTSESKAQAFGHLKPFLKEDGVLFGSTILGRGVEHNRFGRLVMWLSNSLGIFHNYGDHPDDFVRALQKDFNQVEHVVVGRVLLFTAKEPN</sequence>
<reference key="1">
    <citation type="journal article" date="2017" name="Nat. Microbiol.">
        <title>Global analysis of biosynthetic gene clusters reveals vast potential of secondary metabolite production in Penicillium species.</title>
        <authorList>
            <person name="Nielsen J.C."/>
            <person name="Grijseels S."/>
            <person name="Prigent S."/>
            <person name="Ji B."/>
            <person name="Dainat J."/>
            <person name="Nielsen K.F."/>
            <person name="Frisvad J.C."/>
            <person name="Workman M."/>
            <person name="Nielsen J."/>
        </authorList>
    </citation>
    <scope>NUCLEOTIDE SEQUENCE [LARGE SCALE GENOMIC DNA]</scope>
    <source>
        <strain>IBT 4502</strain>
    </source>
</reference>
<reference key="2">
    <citation type="journal article" date="2021" name="Front. Microbiol.">
        <title>CRISPR-Cas9-Based Discovery of the Verrucosidin Biosynthesis Gene Cluster in Penicillium polonicum.</title>
        <authorList>
            <person name="Valente S."/>
            <person name="Piombo E."/>
            <person name="Schroeckh V."/>
            <person name="Meloni G.R."/>
            <person name="Heinekamp T."/>
            <person name="Brakhage A.A."/>
            <person name="Spadaro D."/>
        </authorList>
    </citation>
    <scope>FUNCTION</scope>
</reference>
<dbReference type="EC" id="2.1.1.-" evidence="4"/>
<dbReference type="EMBL" id="MDYM01000002">
    <property type="protein sequence ID" value="OQD68888.1"/>
    <property type="molecule type" value="Genomic_DNA"/>
</dbReference>
<dbReference type="STRING" id="60169.A0A1V6NVX3"/>
<dbReference type="OrthoDB" id="1122at5073"/>
<dbReference type="UniPathway" id="UPA00213"/>
<dbReference type="Proteomes" id="UP000191408">
    <property type="component" value="Unassembled WGS sequence"/>
</dbReference>
<dbReference type="GO" id="GO:0008168">
    <property type="term" value="F:methyltransferase activity"/>
    <property type="evidence" value="ECO:0007669"/>
    <property type="project" value="UniProtKB-KW"/>
</dbReference>
<dbReference type="GO" id="GO:0032259">
    <property type="term" value="P:methylation"/>
    <property type="evidence" value="ECO:0007669"/>
    <property type="project" value="UniProtKB-KW"/>
</dbReference>
<dbReference type="GO" id="GO:0016114">
    <property type="term" value="P:terpenoid biosynthetic process"/>
    <property type="evidence" value="ECO:0007669"/>
    <property type="project" value="UniProtKB-UniPathway"/>
</dbReference>
<dbReference type="Gene3D" id="3.40.50.150">
    <property type="entry name" value="Vaccinia Virus protein VP39"/>
    <property type="match status" value="1"/>
</dbReference>
<dbReference type="InterPro" id="IPR016584">
    <property type="entry name" value="MeTrfase_VrtF"/>
</dbReference>
<dbReference type="InterPro" id="IPR029063">
    <property type="entry name" value="SAM-dependent_MTases_sf"/>
</dbReference>
<dbReference type="PIRSF" id="PIRSF011491">
    <property type="entry name" value="Mtase_YbcY_prd"/>
    <property type="match status" value="1"/>
</dbReference>
<dbReference type="SUPFAM" id="SSF53335">
    <property type="entry name" value="S-adenosyl-L-methionine-dependent methyltransferases"/>
    <property type="match status" value="1"/>
</dbReference>
<proteinExistence type="inferred from homology"/>